<sequence length="279" mass="32417">MFGPRDSRVRGWFLLDSYLPTFTLTIVYLLSIWLGNKYMKNRPALSLRGILTLYNLGITLLSAYMLVELVLSSWEGGYNLQCQNLDSAGEGDIRVAKVLWWYYFSKLVEFLDTIFFVLRKKTSQITFLHVYHHASMFNIWWCVLNWIPCGQSFFGPTLNSFIHILMYSYYGLSVFPSMHRYLWWKKYLTQAQLVQFVLTITHTLSAVVKPCGFPFGCLIFQSSYMMTLVILFLNFYIQTYRKKPMKKEMPEGAAGKEVKNGFPKAHSIAANGVTDKKVQ</sequence>
<dbReference type="EC" id="2.3.1.199" evidence="2 3 4"/>
<dbReference type="EMBL" id="AABR06090841">
    <property type="status" value="NOT_ANNOTATED_CDS"/>
    <property type="molecule type" value="Genomic_DNA"/>
</dbReference>
<dbReference type="EMBL" id="AABR06090842">
    <property type="status" value="NOT_ANNOTATED_CDS"/>
    <property type="molecule type" value="Genomic_DNA"/>
</dbReference>
<dbReference type="EMBL" id="AABR06090843">
    <property type="status" value="NOT_ANNOTATED_CDS"/>
    <property type="molecule type" value="Genomic_DNA"/>
</dbReference>
<dbReference type="EMBL" id="AABR06090844">
    <property type="status" value="NOT_ANNOTATED_CDS"/>
    <property type="molecule type" value="Genomic_DNA"/>
</dbReference>
<dbReference type="EMBL" id="AABR06090845">
    <property type="status" value="NOT_ANNOTATED_CDS"/>
    <property type="molecule type" value="Genomic_DNA"/>
</dbReference>
<dbReference type="EMBL" id="CH473977">
    <property type="protein sequence ID" value="EDL98219.1"/>
    <property type="molecule type" value="Genomic_DNA"/>
</dbReference>
<dbReference type="EMBL" id="CH473977">
    <property type="protein sequence ID" value="EDL98220.1"/>
    <property type="molecule type" value="Genomic_DNA"/>
</dbReference>
<dbReference type="RefSeq" id="NP_001102588.1">
    <property type="nucleotide sequence ID" value="NM_001109118.2"/>
</dbReference>
<dbReference type="RefSeq" id="XP_006253841.1">
    <property type="nucleotide sequence ID" value="XM_006253779.5"/>
</dbReference>
<dbReference type="SMR" id="D4A612"/>
<dbReference type="BioGRID" id="270038">
    <property type="interactions" value="1"/>
</dbReference>
<dbReference type="FunCoup" id="D4A612">
    <property type="interactions" value="586"/>
</dbReference>
<dbReference type="STRING" id="10116.ENSRNOP00000019756"/>
<dbReference type="SwissLipids" id="SLP:000000273"/>
<dbReference type="iPTMnet" id="D4A612"/>
<dbReference type="PhosphoSitePlus" id="D4A612"/>
<dbReference type="PaxDb" id="10116-ENSRNOP00000019756"/>
<dbReference type="Ensembl" id="ENSRNOT00000019756.7">
    <property type="protein sequence ID" value="ENSRNOP00000019756.5"/>
    <property type="gene ID" value="ENSRNOG00000014702.7"/>
</dbReference>
<dbReference type="GeneID" id="498728"/>
<dbReference type="KEGG" id="rno:498728"/>
<dbReference type="UCSC" id="RGD:1308605">
    <property type="organism name" value="rat"/>
</dbReference>
<dbReference type="AGR" id="RGD:1308605"/>
<dbReference type="CTD" id="54898"/>
<dbReference type="RGD" id="1308605">
    <property type="gene designation" value="Elovl2"/>
</dbReference>
<dbReference type="eggNOG" id="KOG3071">
    <property type="taxonomic scope" value="Eukaryota"/>
</dbReference>
<dbReference type="GeneTree" id="ENSGT01050000244838"/>
<dbReference type="HOGENOM" id="CLU_048483_0_1_1"/>
<dbReference type="InParanoid" id="D4A612"/>
<dbReference type="PhylomeDB" id="D4A612"/>
<dbReference type="TreeFam" id="TF323454"/>
<dbReference type="Reactome" id="R-RNO-2046105">
    <property type="pathway name" value="Linoleic acid (LA) metabolism"/>
</dbReference>
<dbReference type="Reactome" id="R-RNO-2046106">
    <property type="pathway name" value="alpha-linolenic acid (ALA) metabolism"/>
</dbReference>
<dbReference type="Reactome" id="R-RNO-75876">
    <property type="pathway name" value="Synthesis of very long-chain fatty acyl-CoAs"/>
</dbReference>
<dbReference type="UniPathway" id="UPA00658"/>
<dbReference type="PRO" id="PR:D4A612"/>
<dbReference type="Proteomes" id="UP000002494">
    <property type="component" value="Chromosome 17"/>
</dbReference>
<dbReference type="Proteomes" id="UP000234681">
    <property type="component" value="Chromosome 17"/>
</dbReference>
<dbReference type="Bgee" id="ENSRNOG00000014702">
    <property type="expression patterns" value="Expressed in testis and 12 other cell types or tissues"/>
</dbReference>
<dbReference type="GO" id="GO:0005783">
    <property type="term" value="C:endoplasmic reticulum"/>
    <property type="evidence" value="ECO:0000266"/>
    <property type="project" value="RGD"/>
</dbReference>
<dbReference type="GO" id="GO:0005789">
    <property type="term" value="C:endoplasmic reticulum membrane"/>
    <property type="evidence" value="ECO:0000318"/>
    <property type="project" value="GO_Central"/>
</dbReference>
<dbReference type="GO" id="GO:0016747">
    <property type="term" value="F:acyltransferase activity, transferring groups other than amino-acyl groups"/>
    <property type="evidence" value="ECO:0000266"/>
    <property type="project" value="RGD"/>
</dbReference>
<dbReference type="GO" id="GO:0009922">
    <property type="term" value="F:fatty acid elongase activity"/>
    <property type="evidence" value="ECO:0000266"/>
    <property type="project" value="RGD"/>
</dbReference>
<dbReference type="GO" id="GO:0034625">
    <property type="term" value="P:fatty acid elongation, monounsaturated fatty acid"/>
    <property type="evidence" value="ECO:0000318"/>
    <property type="project" value="GO_Central"/>
</dbReference>
<dbReference type="GO" id="GO:0034626">
    <property type="term" value="P:fatty acid elongation, polyunsaturated fatty acid"/>
    <property type="evidence" value="ECO:0000266"/>
    <property type="project" value="RGD"/>
</dbReference>
<dbReference type="GO" id="GO:0019367">
    <property type="term" value="P:fatty acid elongation, saturated fatty acid"/>
    <property type="evidence" value="ECO:0000318"/>
    <property type="project" value="GO_Central"/>
</dbReference>
<dbReference type="GO" id="GO:0030148">
    <property type="term" value="P:sphingolipid biosynthetic process"/>
    <property type="evidence" value="ECO:0000318"/>
    <property type="project" value="GO_Central"/>
</dbReference>
<dbReference type="GO" id="GO:0006636">
    <property type="term" value="P:unsaturated fatty acid biosynthetic process"/>
    <property type="evidence" value="ECO:0007669"/>
    <property type="project" value="UniProtKB-UniRule"/>
</dbReference>
<dbReference type="GO" id="GO:0042761">
    <property type="term" value="P:very long-chain fatty acid biosynthetic process"/>
    <property type="evidence" value="ECO:0000266"/>
    <property type="project" value="RGD"/>
</dbReference>
<dbReference type="GO" id="GO:0000038">
    <property type="term" value="P:very long-chain fatty acid metabolic process"/>
    <property type="evidence" value="ECO:0000266"/>
    <property type="project" value="RGD"/>
</dbReference>
<dbReference type="HAMAP" id="MF_03202">
    <property type="entry name" value="VLCF_elongase_2"/>
    <property type="match status" value="1"/>
</dbReference>
<dbReference type="InterPro" id="IPR030457">
    <property type="entry name" value="ELO_CS"/>
</dbReference>
<dbReference type="InterPro" id="IPR002076">
    <property type="entry name" value="ELO_fam"/>
</dbReference>
<dbReference type="InterPro" id="IPR033680">
    <property type="entry name" value="ELOVL2"/>
</dbReference>
<dbReference type="PANTHER" id="PTHR11157:SF16">
    <property type="entry name" value="ELONGATION OF VERY LONG CHAIN FATTY ACIDS PROTEIN 2"/>
    <property type="match status" value="1"/>
</dbReference>
<dbReference type="PANTHER" id="PTHR11157">
    <property type="entry name" value="FATTY ACID ACYL TRANSFERASE-RELATED"/>
    <property type="match status" value="1"/>
</dbReference>
<dbReference type="Pfam" id="PF01151">
    <property type="entry name" value="ELO"/>
    <property type="match status" value="1"/>
</dbReference>
<dbReference type="PROSITE" id="PS01188">
    <property type="entry name" value="ELO"/>
    <property type="match status" value="1"/>
</dbReference>
<protein>
    <recommendedName>
        <fullName evidence="2">Very long chain fatty acid elongase 2</fullName>
        <ecNumber evidence="2 3 4">2.3.1.199</ecNumber>
    </recommendedName>
    <alternativeName>
        <fullName evidence="2">3-keto acyl-CoA synthase Elovl2</fullName>
    </alternativeName>
    <alternativeName>
        <fullName evidence="2">ELOVL fatty acid elongase 2</fullName>
        <shortName evidence="2">ELOVL FA elongase 2</shortName>
    </alternativeName>
    <alternativeName>
        <fullName evidence="2">Elongation of very long chain fatty acids protein 2</fullName>
    </alternativeName>
    <alternativeName>
        <fullName evidence="2">Very long chain 3-ketoacyl-CoA synthase 2</fullName>
    </alternativeName>
    <alternativeName>
        <fullName evidence="2">Very long chain 3-oxoacyl-CoA synthase 2</fullName>
    </alternativeName>
</protein>
<accession>D4A612</accession>
<gene>
    <name evidence="2" type="primary">Elovl2</name>
    <name type="synonym">Ssc2</name>
</gene>
<evidence type="ECO:0000250" key="1">
    <source>
        <dbReference type="UniProtKB" id="Q9NXB9"/>
    </source>
</evidence>
<evidence type="ECO:0000255" key="2">
    <source>
        <dbReference type="HAMAP-Rule" id="MF_03202"/>
    </source>
</evidence>
<evidence type="ECO:0000269" key="3">
    <source>
    </source>
</evidence>
<evidence type="ECO:0000269" key="4">
    <source>
    </source>
</evidence>
<evidence type="ECO:0000305" key="5">
    <source>
    </source>
</evidence>
<feature type="chain" id="PRO_0000423425" description="Very long chain fatty acid elongase 2">
    <location>
        <begin position="1"/>
        <end position="279"/>
    </location>
</feature>
<feature type="transmembrane region" description="Helical" evidence="2">
    <location>
        <begin position="12"/>
        <end position="32"/>
    </location>
</feature>
<feature type="transmembrane region" description="Helical" evidence="2">
    <location>
        <begin position="50"/>
        <end position="70"/>
    </location>
</feature>
<feature type="transmembrane region" description="Helical" evidence="2">
    <location>
        <begin position="98"/>
        <end position="118"/>
    </location>
</feature>
<feature type="transmembrane region" description="Helical" evidence="2">
    <location>
        <begin position="136"/>
        <end position="156"/>
    </location>
</feature>
<feature type="transmembrane region" description="Helical" evidence="2">
    <location>
        <begin position="158"/>
        <end position="178"/>
    </location>
</feature>
<feature type="transmembrane region" description="Helical" evidence="2">
    <location>
        <begin position="188"/>
        <end position="208"/>
    </location>
</feature>
<feature type="transmembrane region" description="Helical" evidence="2">
    <location>
        <begin position="213"/>
        <end position="233"/>
    </location>
</feature>
<feature type="short sequence motif" description="Di-lysine motif" evidence="2">
    <location>
        <begin position="276"/>
        <end position="279"/>
    </location>
</feature>
<feature type="mutagenesis site" description="Decreased elongase activity toward (7Z,10Z,13Z,16Z,19Z)-docosapentaenoyl-CoA." evidence="4">
    <original>C</original>
    <variation>A</variation>
    <location>
        <position position="217"/>
    </location>
</feature>
<feature type="mutagenesis site" description="Decreased elongase activity toward (7Z,10Z,13Z,16Z,19Z)-docosapentaenoyl-CoA." evidence="4">
    <original>C</original>
    <variation>F</variation>
    <location>
        <position position="217"/>
    </location>
</feature>
<feature type="mutagenesis site" description="Loss of elongase activity toward (7Z,10Z,13Z,16Z,19Z)-docosapentaenoyl-CoA." evidence="4">
    <original>C</original>
    <variation>W</variation>
    <location>
        <position position="217"/>
    </location>
</feature>
<organism>
    <name type="scientific">Rattus norvegicus</name>
    <name type="common">Rat</name>
    <dbReference type="NCBI Taxonomy" id="10116"/>
    <lineage>
        <taxon>Eukaryota</taxon>
        <taxon>Metazoa</taxon>
        <taxon>Chordata</taxon>
        <taxon>Craniata</taxon>
        <taxon>Vertebrata</taxon>
        <taxon>Euteleostomi</taxon>
        <taxon>Mammalia</taxon>
        <taxon>Eutheria</taxon>
        <taxon>Euarchontoglires</taxon>
        <taxon>Glires</taxon>
        <taxon>Rodentia</taxon>
        <taxon>Myomorpha</taxon>
        <taxon>Muroidea</taxon>
        <taxon>Muridae</taxon>
        <taxon>Murinae</taxon>
        <taxon>Rattus</taxon>
    </lineage>
</organism>
<keyword id="KW-0256">Endoplasmic reticulum</keyword>
<keyword id="KW-0275">Fatty acid biosynthesis</keyword>
<keyword id="KW-0276">Fatty acid metabolism</keyword>
<keyword id="KW-0444">Lipid biosynthesis</keyword>
<keyword id="KW-0443">Lipid metabolism</keyword>
<keyword id="KW-0472">Membrane</keyword>
<keyword id="KW-1185">Reference proteome</keyword>
<keyword id="KW-0808">Transferase</keyword>
<keyword id="KW-0812">Transmembrane</keyword>
<keyword id="KW-1133">Transmembrane helix</keyword>
<comment type="function">
    <text evidence="2 3 4">Catalyzes the first and rate-limiting reaction of the four reactions that constitute the long-chain fatty acids elongation cycle. This endoplasmic reticulum-bound enzymatic process allows the addition of 2 carbons to the chain of long- and very long-chain fatty acids (VLCFAs) per cycle. Condensing enzyme that catalyzes the synthesis of polyunsaturated very long chain fatty acid (C20- and C22-PUFA), acting specifically toward polyunsaturated acyl-CoA with the higher activity toward C20:4(n-6) acyl-CoA. May participate in the production of polyunsaturated VLCFAs of different chain lengths that are involved in multiple biological processes as precursors of membrane lipids and lipid mediators.</text>
</comment>
<comment type="catalytic activity">
    <reaction evidence="2 3 4">
        <text>a very-long-chain acyl-CoA + malonyl-CoA + H(+) = a very-long-chain 3-oxoacyl-CoA + CO2 + CoA</text>
        <dbReference type="Rhea" id="RHEA:32727"/>
        <dbReference type="ChEBI" id="CHEBI:15378"/>
        <dbReference type="ChEBI" id="CHEBI:16526"/>
        <dbReference type="ChEBI" id="CHEBI:57287"/>
        <dbReference type="ChEBI" id="CHEBI:57384"/>
        <dbReference type="ChEBI" id="CHEBI:90725"/>
        <dbReference type="ChEBI" id="CHEBI:90736"/>
        <dbReference type="EC" id="2.3.1.199"/>
    </reaction>
    <physiologicalReaction direction="left-to-right" evidence="5">
        <dbReference type="Rhea" id="RHEA:32728"/>
    </physiologicalReaction>
</comment>
<comment type="catalytic activity">
    <reaction evidence="3 4">
        <text>(7Z,10Z,13Z,16Z,19Z)-docosapentaenoyl-CoA + malonyl-CoA + H(+) = (9Z,12Z,15Z,18Z,21Z)-3-oxotetracosapentaenoyl-CoA + CO2 + CoA</text>
        <dbReference type="Rhea" id="RHEA:36491"/>
        <dbReference type="ChEBI" id="CHEBI:15378"/>
        <dbReference type="ChEBI" id="CHEBI:16526"/>
        <dbReference type="ChEBI" id="CHEBI:57287"/>
        <dbReference type="ChEBI" id="CHEBI:57384"/>
        <dbReference type="ChEBI" id="CHEBI:73870"/>
        <dbReference type="ChEBI" id="CHEBI:73871"/>
    </reaction>
    <physiologicalReaction direction="left-to-right" evidence="5">
        <dbReference type="Rhea" id="RHEA:36492"/>
    </physiologicalReaction>
</comment>
<comment type="catalytic activity">
    <reaction evidence="3 4">
        <text>(5Z,8Z,11Z,14Z,17Z)-eicosapentaenoyl-CoA + malonyl-CoA + H(+) = 3-oxo-(7Z,10Z,13Z,16Z,19Z)-docosapentaenoyl-CoA + CO2 + CoA</text>
        <dbReference type="Rhea" id="RHEA:36483"/>
        <dbReference type="ChEBI" id="CHEBI:15378"/>
        <dbReference type="ChEBI" id="CHEBI:16526"/>
        <dbReference type="ChEBI" id="CHEBI:57287"/>
        <dbReference type="ChEBI" id="CHEBI:57384"/>
        <dbReference type="ChEBI" id="CHEBI:73862"/>
        <dbReference type="ChEBI" id="CHEBI:73863"/>
    </reaction>
    <physiologicalReaction direction="left-to-right" evidence="5">
        <dbReference type="Rhea" id="RHEA:36484"/>
    </physiologicalReaction>
</comment>
<comment type="catalytic activity">
    <reaction evidence="3">
        <text>(5Z,8Z,11Z,14Z)-eicosatetraenoyl-CoA + malonyl-CoA + H(+) = (7Z,10Z,13Z,16Z)-3-oxodocosatetraenoyl-CoA + CO2 + CoA</text>
        <dbReference type="Rhea" id="RHEA:36475"/>
        <dbReference type="ChEBI" id="CHEBI:15378"/>
        <dbReference type="ChEBI" id="CHEBI:16526"/>
        <dbReference type="ChEBI" id="CHEBI:57287"/>
        <dbReference type="ChEBI" id="CHEBI:57368"/>
        <dbReference type="ChEBI" id="CHEBI:57384"/>
        <dbReference type="ChEBI" id="CHEBI:73852"/>
    </reaction>
    <physiologicalReaction direction="left-to-right" evidence="5">
        <dbReference type="Rhea" id="RHEA:36476"/>
    </physiologicalReaction>
</comment>
<comment type="catalytic activity">
    <reaction evidence="3">
        <text>(7Z,10Z,13Z,16Z)-docosatetraenoyl-CoA + malonyl-CoA + H(+) = (9Z,12Z,15Z,18Z)-3-oxotetracosatetraenoyl-CoA + CO2 + CoA</text>
        <dbReference type="Rhea" id="RHEA:36479"/>
        <dbReference type="ChEBI" id="CHEBI:15378"/>
        <dbReference type="ChEBI" id="CHEBI:16526"/>
        <dbReference type="ChEBI" id="CHEBI:57287"/>
        <dbReference type="ChEBI" id="CHEBI:57384"/>
        <dbReference type="ChEBI" id="CHEBI:73856"/>
        <dbReference type="ChEBI" id="CHEBI:73857"/>
    </reaction>
    <physiologicalReaction direction="left-to-right" evidence="5">
        <dbReference type="Rhea" id="RHEA:36480"/>
    </physiologicalReaction>
</comment>
<comment type="pathway">
    <text evidence="2 3 4">Lipid metabolism; polyunsaturated fatty acid biosynthesis.</text>
</comment>
<comment type="subunit">
    <text evidence="1">Interacts with TECR.</text>
</comment>
<comment type="subcellular location">
    <subcellularLocation>
        <location evidence="2">Endoplasmic reticulum membrane</location>
        <topology evidence="2">Multi-pass membrane protein</topology>
    </subcellularLocation>
</comment>
<comment type="domain">
    <text evidence="2">The C-terminal di-lysine motif may confer endoplasmic reticulum localization.</text>
</comment>
<comment type="similarity">
    <text evidence="2">Belongs to the ELO family. ELOVL2 subfamily.</text>
</comment>
<proteinExistence type="evidence at protein level"/>
<reference key="1">
    <citation type="journal article" date="2004" name="Nature">
        <title>Genome sequence of the Brown Norway rat yields insights into mammalian evolution.</title>
        <authorList>
            <person name="Gibbs R.A."/>
            <person name="Weinstock G.M."/>
            <person name="Metzker M.L."/>
            <person name="Muzny D.M."/>
            <person name="Sodergren E.J."/>
            <person name="Scherer S."/>
            <person name="Scott G."/>
            <person name="Steffen D."/>
            <person name="Worley K.C."/>
            <person name="Burch P.E."/>
            <person name="Okwuonu G."/>
            <person name="Hines S."/>
            <person name="Lewis L."/>
            <person name="Deramo C."/>
            <person name="Delgado O."/>
            <person name="Dugan-Rocha S."/>
            <person name="Miner G."/>
            <person name="Morgan M."/>
            <person name="Hawes A."/>
            <person name="Gill R."/>
            <person name="Holt R.A."/>
            <person name="Adams M.D."/>
            <person name="Amanatides P.G."/>
            <person name="Baden-Tillson H."/>
            <person name="Barnstead M."/>
            <person name="Chin S."/>
            <person name="Evans C.A."/>
            <person name="Ferriera S."/>
            <person name="Fosler C."/>
            <person name="Glodek A."/>
            <person name="Gu Z."/>
            <person name="Jennings D."/>
            <person name="Kraft C.L."/>
            <person name="Nguyen T."/>
            <person name="Pfannkoch C.M."/>
            <person name="Sitter C."/>
            <person name="Sutton G.G."/>
            <person name="Venter J.C."/>
            <person name="Woodage T."/>
            <person name="Smith D."/>
            <person name="Lee H.-M."/>
            <person name="Gustafson E."/>
            <person name="Cahill P."/>
            <person name="Kana A."/>
            <person name="Doucette-Stamm L."/>
            <person name="Weinstock K."/>
            <person name="Fechtel K."/>
            <person name="Weiss R.B."/>
            <person name="Dunn D.M."/>
            <person name="Green E.D."/>
            <person name="Blakesley R.W."/>
            <person name="Bouffard G.G."/>
            <person name="De Jong P.J."/>
            <person name="Osoegawa K."/>
            <person name="Zhu B."/>
            <person name="Marra M."/>
            <person name="Schein J."/>
            <person name="Bosdet I."/>
            <person name="Fjell C."/>
            <person name="Jones S."/>
            <person name="Krzywinski M."/>
            <person name="Mathewson C."/>
            <person name="Siddiqui A."/>
            <person name="Wye N."/>
            <person name="McPherson J."/>
            <person name="Zhao S."/>
            <person name="Fraser C.M."/>
            <person name="Shetty J."/>
            <person name="Shatsman S."/>
            <person name="Geer K."/>
            <person name="Chen Y."/>
            <person name="Abramzon S."/>
            <person name="Nierman W.C."/>
            <person name="Havlak P.H."/>
            <person name="Chen R."/>
            <person name="Durbin K.J."/>
            <person name="Egan A."/>
            <person name="Ren Y."/>
            <person name="Song X.-Z."/>
            <person name="Li B."/>
            <person name="Liu Y."/>
            <person name="Qin X."/>
            <person name="Cawley S."/>
            <person name="Cooney A.J."/>
            <person name="D'Souza L.M."/>
            <person name="Martin K."/>
            <person name="Wu J.Q."/>
            <person name="Gonzalez-Garay M.L."/>
            <person name="Jackson A.R."/>
            <person name="Kalafus K.J."/>
            <person name="McLeod M.P."/>
            <person name="Milosavljevic A."/>
            <person name="Virk D."/>
            <person name="Volkov A."/>
            <person name="Wheeler D.A."/>
            <person name="Zhang Z."/>
            <person name="Bailey J.A."/>
            <person name="Eichler E.E."/>
            <person name="Tuzun E."/>
            <person name="Birney E."/>
            <person name="Mongin E."/>
            <person name="Ureta-Vidal A."/>
            <person name="Woodwark C."/>
            <person name="Zdobnov E."/>
            <person name="Bork P."/>
            <person name="Suyama M."/>
            <person name="Torrents D."/>
            <person name="Alexandersson M."/>
            <person name="Trask B.J."/>
            <person name="Young J.M."/>
            <person name="Huang H."/>
            <person name="Wang H."/>
            <person name="Xing H."/>
            <person name="Daniels S."/>
            <person name="Gietzen D."/>
            <person name="Schmidt J."/>
            <person name="Stevens K."/>
            <person name="Vitt U."/>
            <person name="Wingrove J."/>
            <person name="Camara F."/>
            <person name="Mar Alba M."/>
            <person name="Abril J.F."/>
            <person name="Guigo R."/>
            <person name="Smit A."/>
            <person name="Dubchak I."/>
            <person name="Rubin E.M."/>
            <person name="Couronne O."/>
            <person name="Poliakov A."/>
            <person name="Huebner N."/>
            <person name="Ganten D."/>
            <person name="Goesele C."/>
            <person name="Hummel O."/>
            <person name="Kreitler T."/>
            <person name="Lee Y.-A."/>
            <person name="Monti J."/>
            <person name="Schulz H."/>
            <person name="Zimdahl H."/>
            <person name="Himmelbauer H."/>
            <person name="Lehrach H."/>
            <person name="Jacob H.J."/>
            <person name="Bromberg S."/>
            <person name="Gullings-Handley J."/>
            <person name="Jensen-Seaman M.I."/>
            <person name="Kwitek A.E."/>
            <person name="Lazar J."/>
            <person name="Pasko D."/>
            <person name="Tonellato P.J."/>
            <person name="Twigger S."/>
            <person name="Ponting C.P."/>
            <person name="Duarte J.M."/>
            <person name="Rice S."/>
            <person name="Goodstadt L."/>
            <person name="Beatson S.A."/>
            <person name="Emes R.D."/>
            <person name="Winter E.E."/>
            <person name="Webber C."/>
            <person name="Brandt P."/>
            <person name="Nyakatura G."/>
            <person name="Adetobi M."/>
            <person name="Chiaromonte F."/>
            <person name="Elnitski L."/>
            <person name="Eswara P."/>
            <person name="Hardison R.C."/>
            <person name="Hou M."/>
            <person name="Kolbe D."/>
            <person name="Makova K."/>
            <person name="Miller W."/>
            <person name="Nekrutenko A."/>
            <person name="Riemer C."/>
            <person name="Schwartz S."/>
            <person name="Taylor J."/>
            <person name="Yang S."/>
            <person name="Zhang Y."/>
            <person name="Lindpaintner K."/>
            <person name="Andrews T.D."/>
            <person name="Caccamo M."/>
            <person name="Clamp M."/>
            <person name="Clarke L."/>
            <person name="Curwen V."/>
            <person name="Durbin R.M."/>
            <person name="Eyras E."/>
            <person name="Searle S.M."/>
            <person name="Cooper G.M."/>
            <person name="Batzoglou S."/>
            <person name="Brudno M."/>
            <person name="Sidow A."/>
            <person name="Stone E.A."/>
            <person name="Payseur B.A."/>
            <person name="Bourque G."/>
            <person name="Lopez-Otin C."/>
            <person name="Puente X.S."/>
            <person name="Chakrabarti K."/>
            <person name="Chatterji S."/>
            <person name="Dewey C."/>
            <person name="Pachter L."/>
            <person name="Bray N."/>
            <person name="Yap V.B."/>
            <person name="Caspi A."/>
            <person name="Tesler G."/>
            <person name="Pevzner P.A."/>
            <person name="Haussler D."/>
            <person name="Roskin K.M."/>
            <person name="Baertsch R."/>
            <person name="Clawson H."/>
            <person name="Furey T.S."/>
            <person name="Hinrichs A.S."/>
            <person name="Karolchik D."/>
            <person name="Kent W.J."/>
            <person name="Rosenbloom K.R."/>
            <person name="Trumbower H."/>
            <person name="Weirauch M."/>
            <person name="Cooper D.N."/>
            <person name="Stenson P.D."/>
            <person name="Ma B."/>
            <person name="Brent M."/>
            <person name="Arumugam M."/>
            <person name="Shteynberg D."/>
            <person name="Copley R.R."/>
            <person name="Taylor M.S."/>
            <person name="Riethman H."/>
            <person name="Mudunuri U."/>
            <person name="Peterson J."/>
            <person name="Guyer M."/>
            <person name="Felsenfeld A."/>
            <person name="Old S."/>
            <person name="Mockrin S."/>
            <person name="Collins F.S."/>
        </authorList>
    </citation>
    <scope>NUCLEOTIDE SEQUENCE [LARGE SCALE GENOMIC DNA]</scope>
    <source>
        <strain>Brown Norway</strain>
    </source>
</reference>
<reference key="2">
    <citation type="journal article" date="2011" name="PLoS ONE">
        <title>Elongase reactions as control points in long-chain polyunsaturated fatty acid synthesis.</title>
        <authorList>
            <person name="Gregory M.K."/>
            <person name="Gibson R.A."/>
            <person name="Cook-Johnson R.J."/>
            <person name="Cleland L.G."/>
            <person name="James M.J."/>
        </authorList>
    </citation>
    <scope>FUNCTION</scope>
    <scope>CATALYTIC ACTIVITY</scope>
    <scope>PATHWAY</scope>
</reference>
<reference key="3">
    <citation type="journal article" date="2013" name="J. Lipid Res.">
        <title>Molecular basis for differential elongation of omega-3 docosapentaenoic acid by the rat Elovl5 and Elovl2.</title>
        <authorList>
            <person name="Gregory M.K."/>
            <person name="Cleland L.G."/>
            <person name="James M.J."/>
        </authorList>
    </citation>
    <scope>FUNCTION</scope>
    <scope>CATALYTIC ACTIVITY</scope>
    <scope>PATHWAY</scope>
    <scope>MUTAGENESIS OF CYS-217</scope>
</reference>
<name>ELOV2_RAT</name>